<reference key="1">
    <citation type="journal article" date="2000" name="Nucleic Acids Res.">
        <title>Genome sequences of Chlamydia trachomatis MoPn and Chlamydia pneumoniae AR39.</title>
        <authorList>
            <person name="Read T.D."/>
            <person name="Brunham R.C."/>
            <person name="Shen C."/>
            <person name="Gill S.R."/>
            <person name="Heidelberg J.F."/>
            <person name="White O."/>
            <person name="Hickey E.K."/>
            <person name="Peterson J.D."/>
            <person name="Utterback T.R."/>
            <person name="Berry K.J."/>
            <person name="Bass S."/>
            <person name="Linher K.D."/>
            <person name="Weidman J.F."/>
            <person name="Khouri H.M."/>
            <person name="Craven B."/>
            <person name="Bowman C."/>
            <person name="Dodson R.J."/>
            <person name="Gwinn M.L."/>
            <person name="Nelson W.C."/>
            <person name="DeBoy R.T."/>
            <person name="Kolonay J.F."/>
            <person name="McClarty G."/>
            <person name="Salzberg S.L."/>
            <person name="Eisen J.A."/>
            <person name="Fraser C.M."/>
        </authorList>
    </citation>
    <scope>NUCLEOTIDE SEQUENCE [LARGE SCALE GENOMIC DNA]</scope>
    <source>
        <strain>MoPn / Nigg</strain>
    </source>
</reference>
<protein>
    <recommendedName>
        <fullName>Uracil-DNA glycosylase</fullName>
        <shortName>UDG</shortName>
        <ecNumber>3.2.2.27</ecNumber>
    </recommendedName>
</protein>
<keyword id="KW-0963">Cytoplasm</keyword>
<keyword id="KW-0227">DNA damage</keyword>
<keyword id="KW-0234">DNA repair</keyword>
<keyword id="KW-0378">Hydrolase</keyword>
<sequence length="229" mass="25972">MHEAFTIEQLPQSWQEQLKDEWSQPYWSQLLTFLKSEYANATVYPKKEHVFSALRSTPFDQVKVVILGQDPYHGEGQAHGLSFSVPKGQALPPSLRNIFQELQADLGIRNETGCLQTWADQGVLLLNTVLTVRAGEAFSHAGRGWEHFTDAIVTKLIQNRTHIIFVLWGSAARKKCDLLFQTKHQHAILACPHPSPLAAHRGFFGCCHFSKINYLLKKQGKPMINWKIA</sequence>
<name>UNG_CHLMU</name>
<organism>
    <name type="scientific">Chlamydia muridarum (strain MoPn / Nigg)</name>
    <dbReference type="NCBI Taxonomy" id="243161"/>
    <lineage>
        <taxon>Bacteria</taxon>
        <taxon>Pseudomonadati</taxon>
        <taxon>Chlamydiota</taxon>
        <taxon>Chlamydiia</taxon>
        <taxon>Chlamydiales</taxon>
        <taxon>Chlamydiaceae</taxon>
        <taxon>Chlamydia/Chlamydophila group</taxon>
        <taxon>Chlamydia</taxon>
    </lineage>
</organism>
<accession>Q9PJD2</accession>
<proteinExistence type="inferred from homology"/>
<evidence type="ECO:0000250" key="1"/>
<evidence type="ECO:0000305" key="2"/>
<feature type="chain" id="PRO_0000176082" description="Uracil-DNA glycosylase">
    <location>
        <begin position="1"/>
        <end position="229"/>
    </location>
</feature>
<feature type="active site" description="Proton acceptor" evidence="1">
    <location>
        <position position="70"/>
    </location>
</feature>
<comment type="function">
    <text evidence="1">Excises uracil residues from the DNA which can arise as a result of misincorporation of dUMP residues by DNA polymerase or due to deamination of cytosine.</text>
</comment>
<comment type="catalytic activity">
    <reaction>
        <text>Hydrolyzes single-stranded DNA or mismatched double-stranded DNA and polynucleotides, releasing free uracil.</text>
        <dbReference type="EC" id="3.2.2.27"/>
    </reaction>
</comment>
<comment type="subcellular location">
    <subcellularLocation>
        <location evidence="1">Cytoplasm</location>
    </subcellularLocation>
</comment>
<comment type="similarity">
    <text evidence="2">Belongs to the uracil-DNA glycosylase (UDG) superfamily. UNG family.</text>
</comment>
<gene>
    <name type="primary">ung</name>
    <name type="ordered locus">TC_0897</name>
</gene>
<dbReference type="EC" id="3.2.2.27"/>
<dbReference type="EMBL" id="AE002160">
    <property type="protein sequence ID" value="AAF39691.1"/>
    <property type="molecule type" value="Genomic_DNA"/>
</dbReference>
<dbReference type="PIR" id="B81652">
    <property type="entry name" value="B81652"/>
</dbReference>
<dbReference type="RefSeq" id="WP_010231877.1">
    <property type="nucleotide sequence ID" value="NZ_CP063055.1"/>
</dbReference>
<dbReference type="SMR" id="Q9PJD2"/>
<dbReference type="GeneID" id="1246266"/>
<dbReference type="KEGG" id="cmu:TC_0897"/>
<dbReference type="eggNOG" id="COG0692">
    <property type="taxonomic scope" value="Bacteria"/>
</dbReference>
<dbReference type="HOGENOM" id="CLU_032162_3_0_0"/>
<dbReference type="OrthoDB" id="9804372at2"/>
<dbReference type="Proteomes" id="UP000000800">
    <property type="component" value="Chromosome"/>
</dbReference>
<dbReference type="GO" id="GO:0005737">
    <property type="term" value="C:cytoplasm"/>
    <property type="evidence" value="ECO:0007669"/>
    <property type="project" value="UniProtKB-SubCell"/>
</dbReference>
<dbReference type="GO" id="GO:0004844">
    <property type="term" value="F:uracil DNA N-glycosylase activity"/>
    <property type="evidence" value="ECO:0007669"/>
    <property type="project" value="UniProtKB-UniRule"/>
</dbReference>
<dbReference type="GO" id="GO:0097510">
    <property type="term" value="P:base-excision repair, AP site formation via deaminated base removal"/>
    <property type="evidence" value="ECO:0007669"/>
    <property type="project" value="TreeGrafter"/>
</dbReference>
<dbReference type="CDD" id="cd10027">
    <property type="entry name" value="UDG-F1-like"/>
    <property type="match status" value="1"/>
</dbReference>
<dbReference type="FunFam" id="3.40.470.10:FF:000008">
    <property type="entry name" value="Uracil-DNA glycosylase"/>
    <property type="match status" value="1"/>
</dbReference>
<dbReference type="Gene3D" id="3.40.470.10">
    <property type="entry name" value="Uracil-DNA glycosylase-like domain"/>
    <property type="match status" value="1"/>
</dbReference>
<dbReference type="HAMAP" id="MF_00148">
    <property type="entry name" value="UDG"/>
    <property type="match status" value="1"/>
</dbReference>
<dbReference type="InterPro" id="IPR002043">
    <property type="entry name" value="UDG_fam1"/>
</dbReference>
<dbReference type="InterPro" id="IPR018085">
    <property type="entry name" value="Ura-DNA_Glyclase_AS"/>
</dbReference>
<dbReference type="InterPro" id="IPR005122">
    <property type="entry name" value="Uracil-DNA_glycosylase-like"/>
</dbReference>
<dbReference type="InterPro" id="IPR036895">
    <property type="entry name" value="Uracil-DNA_glycosylase-like_sf"/>
</dbReference>
<dbReference type="NCBIfam" id="NF003588">
    <property type="entry name" value="PRK05254.1-1"/>
    <property type="match status" value="1"/>
</dbReference>
<dbReference type="NCBIfam" id="NF003589">
    <property type="entry name" value="PRK05254.1-2"/>
    <property type="match status" value="1"/>
</dbReference>
<dbReference type="NCBIfam" id="NF003591">
    <property type="entry name" value="PRK05254.1-4"/>
    <property type="match status" value="1"/>
</dbReference>
<dbReference type="NCBIfam" id="NF003592">
    <property type="entry name" value="PRK05254.1-5"/>
    <property type="match status" value="1"/>
</dbReference>
<dbReference type="NCBIfam" id="TIGR00628">
    <property type="entry name" value="ung"/>
    <property type="match status" value="1"/>
</dbReference>
<dbReference type="PANTHER" id="PTHR11264">
    <property type="entry name" value="URACIL-DNA GLYCOSYLASE"/>
    <property type="match status" value="1"/>
</dbReference>
<dbReference type="PANTHER" id="PTHR11264:SF0">
    <property type="entry name" value="URACIL-DNA GLYCOSYLASE"/>
    <property type="match status" value="1"/>
</dbReference>
<dbReference type="Pfam" id="PF03167">
    <property type="entry name" value="UDG"/>
    <property type="match status" value="1"/>
</dbReference>
<dbReference type="SMART" id="SM00986">
    <property type="entry name" value="UDG"/>
    <property type="match status" value="1"/>
</dbReference>
<dbReference type="SMART" id="SM00987">
    <property type="entry name" value="UreE_C"/>
    <property type="match status" value="1"/>
</dbReference>
<dbReference type="SUPFAM" id="SSF52141">
    <property type="entry name" value="Uracil-DNA glycosylase-like"/>
    <property type="match status" value="1"/>
</dbReference>
<dbReference type="PROSITE" id="PS00130">
    <property type="entry name" value="U_DNA_GLYCOSYLASE"/>
    <property type="match status" value="1"/>
</dbReference>